<comment type="function">
    <text evidence="1 4 7 8">Component of the MCM8-MCM9 complex, a complex involved in the repair of double-stranded DNA breaks (DBSs) and DNA interstrand cross-links (ICLs) by homologous recombination (HR) (PubMed:23401855). Required for DNA resection by the MRE11-RAD50-NBN/NBS1 (MRN) complex by recruiting the MRN complex to the repair site and by promoting the complex nuclease activity (PubMed:26215093). Probably by regulating the localization of the MRN complex, indirectly regulates the recruitment of downstream effector RAD51 to DNA damage sites including DBSs and ICLs (PubMed:23401855). Acts as a helicase in DNA mismatch repair (MMR) following DNA replication errors to unwind the mismatch containing DNA strand (PubMed:26300262). In addition, recruits MLH1, a component of the MMR complex, to chromatin (PubMed:26300262). The MCM8-MCM9 complex is dispensable for DNA replication and S phase progression (PubMed:23401855). Probably by regulating HR, plays a key role during gametogenesis (By similarity).</text>
</comment>
<comment type="catalytic activity">
    <reaction evidence="8">
        <text>ATP + H2O = ADP + phosphate + H(+)</text>
        <dbReference type="Rhea" id="RHEA:13065"/>
        <dbReference type="ChEBI" id="CHEBI:15377"/>
        <dbReference type="ChEBI" id="CHEBI:15378"/>
        <dbReference type="ChEBI" id="CHEBI:30616"/>
        <dbReference type="ChEBI" id="CHEBI:43474"/>
        <dbReference type="ChEBI" id="CHEBI:456216"/>
        <dbReference type="EC" id="3.6.4.12"/>
    </reaction>
</comment>
<comment type="subunit">
    <text evidence="4 7 8">Component of the MCM8-MCM9 complex, which forms a hexamer composed of MCM8 and MCM9 (PubMed:23401855, PubMed:26215093, PubMed:26300262). Interacts with the DNA mismatch repair (MMR) complex composed at least of MSH2, MSH3, MSH6, PMS1 and MLH1 (PubMed:26300262). Interacts with MLH1; the interaction recruits MLH1 to chromatin (PubMed:26300262). Interacts with MSH2; the interaction recruits MCM9 to chromatin (PubMed:26300262). Interacts with MSH6 (PubMed:26300262). Interacts with the MRN complex composed of MRE11, RAD50 and NBN/NBS1; the interaction recruits the MRN complex to DNA damage sites (PubMed:26215093). Interacts with RAD51; the interaction recruits RAD51 to DNA damage sites (PubMed:23401855).</text>
</comment>
<comment type="interaction">
    <interactant intactId="EBI-2804985">
        <id>Q9NXL9</id>
    </interactant>
    <interactant intactId="EBI-8756095">
        <id>Q9UJA3</id>
        <label>MCM8</label>
    </interactant>
    <organismsDiffer>false</organismsDiffer>
    <experiments>5</experiments>
</comment>
<comment type="interaction">
    <interactant intactId="EBI-2804985">
        <id>Q9NXL9</id>
    </interactant>
    <interactant intactId="EBI-744248">
        <id>P40692</id>
        <label>MLH1</label>
    </interactant>
    <organismsDiffer>false</organismsDiffer>
    <experiments>5</experiments>
</comment>
<comment type="interaction">
    <interactant intactId="EBI-2804985">
        <id>Q9NXL9</id>
    </interactant>
    <interactant intactId="EBI-395529">
        <id>P52701</id>
        <label>MSH6</label>
    </interactant>
    <organismsDiffer>false</organismsDiffer>
    <experiments>3</experiments>
</comment>
<comment type="interaction">
    <interactant intactId="EBI-18899369">
        <id>Q9NXL9-3</id>
    </interactant>
    <interactant intactId="EBI-6165891">
        <id>Q14696</id>
        <label>MESD</label>
    </interactant>
    <organismsDiffer>false</organismsDiffer>
    <experiments>3</experiments>
</comment>
<comment type="subcellular location">
    <subcellularLocation>
        <location evidence="4 8">Nucleus</location>
    </subcellularLocation>
    <subcellularLocation>
        <location evidence="4 8">Chromosome</location>
    </subcellularLocation>
    <text evidence="4 8">Colocalizes to nuclear foci with RPA1 following DNA damage (PubMed:23401855). Localizes to double-stranded DNA breaks (PubMed:23401855). Recruited to chromatin by MSH2 (PubMed:26300262).</text>
</comment>
<comment type="alternative products">
    <event type="alternative splicing"/>
    <isoform>
        <id>Q9NXL9-1</id>
        <name>L</name>
        <sequence type="displayed"/>
    </isoform>
    <isoform>
        <id>Q9NXL9-2</id>
        <name>M</name>
        <sequence type="described" ref="VSP_047462 VSP_047463"/>
    </isoform>
    <isoform>
        <id>Q9NXL9-3</id>
        <name>S</name>
        <sequence type="described" ref="VSP_028013 VSP_028014"/>
    </isoform>
    <isoform>
        <id>Q9NXL9-4</id>
        <name>4</name>
        <sequence type="described" ref="VSP_044180 VSP_044181"/>
    </isoform>
</comment>
<comment type="developmental stage">
    <text evidence="5">The expression of isoform L and isoform M is cell cycle regulated: induced in S-phase, decreases through G2/M, and becomes constant through G1.</text>
</comment>
<comment type="disease" evidence="6">
    <disease id="DI-04296">
        <name>Ovarian dysgenesis 4</name>
        <acronym>ODG4</acronym>
        <description>A form of ovarian dysgenesis, a disorder characterized by lack of spontaneous pubertal development, primary amenorrhea, uterine hypoplasia, and hypergonadotropic hypogonadism as a result of streak gonads. ODG4 is an autosomal recessive condition.</description>
        <dbReference type="MIM" id="616185"/>
    </disease>
    <text>The disease is caused by variants affecting the gene represented in this entry.</text>
</comment>
<comment type="miscellaneous">
    <molecule>Isoform L</molecule>
    <text>Most abundant isoform.</text>
</comment>
<comment type="similarity">
    <text evidence="11">Belongs to the MCM family.</text>
</comment>
<comment type="sequence caution" evidence="11">
    <conflict type="erroneous initiation">
        <sequence resource="EMBL-CDS" id="BAA90991"/>
    </conflict>
    <text>Truncated N-terminus.</text>
</comment>
<comment type="sequence caution" evidence="11">
    <conflict type="erroneous termination">
        <sequence resource="EMBL-CDS" id="BAG61142"/>
    </conflict>
    <text>Truncated C-terminus.</text>
</comment>
<dbReference type="EC" id="3.6.4.12" evidence="8"/>
<dbReference type="EMBL" id="AK299076">
    <property type="protein sequence ID" value="BAG61142.1"/>
    <property type="status" value="ALT_SEQ"/>
    <property type="molecule type" value="mRNA"/>
</dbReference>
<dbReference type="EMBL" id="AK000177">
    <property type="protein sequence ID" value="BAA90991.1"/>
    <property type="status" value="ALT_INIT"/>
    <property type="molecule type" value="mRNA"/>
</dbReference>
<dbReference type="EMBL" id="AL132874">
    <property type="status" value="NOT_ANNOTATED_CDS"/>
    <property type="molecule type" value="Genomic_DNA"/>
</dbReference>
<dbReference type="EMBL" id="AL359634">
    <property type="status" value="NOT_ANNOTATED_CDS"/>
    <property type="molecule type" value="Genomic_DNA"/>
</dbReference>
<dbReference type="EMBL" id="BC031658">
    <property type="protein sequence ID" value="AAH31658.1"/>
    <property type="molecule type" value="mRNA"/>
</dbReference>
<dbReference type="EMBL" id="BN000882">
    <property type="protein sequence ID" value="CAJ70648.1"/>
    <property type="molecule type" value="mRNA"/>
</dbReference>
<dbReference type="CCDS" id="CCDS5121.1">
    <molecule id="Q9NXL9-3"/>
</dbReference>
<dbReference type="CCDS" id="CCDS56447.1">
    <molecule id="Q9NXL9-1"/>
</dbReference>
<dbReference type="RefSeq" id="NP_001365285.1">
    <molecule id="Q9NXL9-1"/>
    <property type="nucleotide sequence ID" value="NM_001378356.1"/>
</dbReference>
<dbReference type="RefSeq" id="NP_001365286.1">
    <molecule id="Q9NXL9-1"/>
    <property type="nucleotide sequence ID" value="NM_001378357.1"/>
</dbReference>
<dbReference type="RefSeq" id="NP_001365287.1">
    <molecule id="Q9NXL9-3"/>
    <property type="nucleotide sequence ID" value="NM_001378358.1"/>
</dbReference>
<dbReference type="RefSeq" id="NP_001365288.1">
    <molecule id="Q9NXL9-2"/>
    <property type="nucleotide sequence ID" value="NM_001378359.1"/>
</dbReference>
<dbReference type="RefSeq" id="NP_001365289.1">
    <molecule id="Q9NXL9-2"/>
    <property type="nucleotide sequence ID" value="NM_001378360.1"/>
</dbReference>
<dbReference type="RefSeq" id="NP_060166.2">
    <molecule id="Q9NXL9-1"/>
    <property type="nucleotide sequence ID" value="NM_017696.2"/>
</dbReference>
<dbReference type="RefSeq" id="NP_694987.1">
    <molecule id="Q9NXL9-3"/>
    <property type="nucleotide sequence ID" value="NM_153255.5"/>
</dbReference>
<dbReference type="PDB" id="7DPD">
    <property type="method" value="X-ray"/>
    <property type="resolution" value="2.55 A"/>
    <property type="chains" value="A/B=1-277"/>
</dbReference>
<dbReference type="PDB" id="7WI7">
    <property type="method" value="X-ray"/>
    <property type="resolution" value="6.60 A"/>
    <property type="chains" value="B=1-684"/>
</dbReference>
<dbReference type="PDB" id="7YOX">
    <property type="method" value="EM"/>
    <property type="resolution" value="3.95 A"/>
    <property type="chains" value="B/D/E=1-276"/>
</dbReference>
<dbReference type="PDB" id="8S91">
    <property type="method" value="EM"/>
    <property type="resolution" value="4.30 A"/>
    <property type="chains" value="D/E/F=1-1143"/>
</dbReference>
<dbReference type="PDB" id="8S92">
    <property type="method" value="EM"/>
    <property type="resolution" value="4.06 A"/>
    <property type="chains" value="D/E/F=1-1143"/>
</dbReference>
<dbReference type="PDB" id="8S94">
    <property type="method" value="EM"/>
    <property type="resolution" value="3.94 A"/>
    <property type="chains" value="D/E/F=1-1143"/>
</dbReference>
<dbReference type="PDBsum" id="7DPD"/>
<dbReference type="PDBsum" id="7WI7"/>
<dbReference type="PDBsum" id="7YOX"/>
<dbReference type="PDBsum" id="8S91"/>
<dbReference type="PDBsum" id="8S92"/>
<dbReference type="PDBsum" id="8S94"/>
<dbReference type="EMDB" id="EMD-33989"/>
<dbReference type="EMDB" id="EMD-40234"/>
<dbReference type="EMDB" id="EMD-40235"/>
<dbReference type="EMDB" id="EMD-40236"/>
<dbReference type="EMDB" id="EMD-40237"/>
<dbReference type="SMR" id="Q9NXL9"/>
<dbReference type="BioGRID" id="129033">
    <property type="interactions" value="57"/>
</dbReference>
<dbReference type="ComplexPortal" id="CPX-7113">
    <property type="entry name" value="MCM8-MCM9 DNA helicase complex"/>
</dbReference>
<dbReference type="CORUM" id="Q9NXL9"/>
<dbReference type="FunCoup" id="Q9NXL9">
    <property type="interactions" value="1468"/>
</dbReference>
<dbReference type="IntAct" id="Q9NXL9">
    <property type="interactions" value="42"/>
</dbReference>
<dbReference type="MINT" id="Q9NXL9"/>
<dbReference type="STRING" id="9606.ENSP00000314505"/>
<dbReference type="GlyGen" id="Q9NXL9">
    <property type="glycosylation" value="1 site, 1 N-linked glycan (1 site)"/>
</dbReference>
<dbReference type="iPTMnet" id="Q9NXL9"/>
<dbReference type="PhosphoSitePlus" id="Q9NXL9"/>
<dbReference type="BioMuta" id="MCM9"/>
<dbReference type="DMDM" id="387912921"/>
<dbReference type="jPOST" id="Q9NXL9"/>
<dbReference type="MassIVE" id="Q9NXL9"/>
<dbReference type="PaxDb" id="9606-ENSP00000314505"/>
<dbReference type="PeptideAtlas" id="Q9NXL9"/>
<dbReference type="ProteomicsDB" id="83112">
    <molecule id="Q9NXL9-1"/>
</dbReference>
<dbReference type="ProteomicsDB" id="83113">
    <molecule id="Q9NXL9-2"/>
</dbReference>
<dbReference type="Pumba" id="Q9NXL9"/>
<dbReference type="Antibodypedia" id="34788">
    <property type="antibodies" value="89 antibodies from 25 providers"/>
</dbReference>
<dbReference type="DNASU" id="254394"/>
<dbReference type="Ensembl" id="ENST00000316068.7">
    <molecule id="Q9NXL9-3"/>
    <property type="protein sequence ID" value="ENSP00000312870.3"/>
    <property type="gene ID" value="ENSG00000111877.18"/>
</dbReference>
<dbReference type="Ensembl" id="ENST00000316316.10">
    <molecule id="Q9NXL9-1"/>
    <property type="protein sequence ID" value="ENSP00000314505.5"/>
    <property type="gene ID" value="ENSG00000111877.18"/>
</dbReference>
<dbReference type="Ensembl" id="ENST00000619706.5">
    <molecule id="Q9NXL9-1"/>
    <property type="protein sequence ID" value="ENSP00000480469.1"/>
    <property type="gene ID" value="ENSG00000111877.18"/>
</dbReference>
<dbReference type="GeneID" id="254394"/>
<dbReference type="KEGG" id="hsa:254394"/>
<dbReference type="MANE-Select" id="ENST00000619706.5">
    <property type="protein sequence ID" value="ENSP00000480469.1"/>
    <property type="RefSeq nucleotide sequence ID" value="NM_017696.3"/>
    <property type="RefSeq protein sequence ID" value="NP_060166.2"/>
</dbReference>
<dbReference type="UCSC" id="uc003pyh.4">
    <molecule id="Q9NXL9-1"/>
    <property type="organism name" value="human"/>
</dbReference>
<dbReference type="AGR" id="HGNC:21484"/>
<dbReference type="CTD" id="254394"/>
<dbReference type="DisGeNET" id="254394"/>
<dbReference type="GeneCards" id="MCM9"/>
<dbReference type="HGNC" id="HGNC:21484">
    <property type="gene designation" value="MCM9"/>
</dbReference>
<dbReference type="HPA" id="ENSG00000111877">
    <property type="expression patterns" value="Low tissue specificity"/>
</dbReference>
<dbReference type="MalaCards" id="MCM9"/>
<dbReference type="MIM" id="610098">
    <property type="type" value="gene"/>
</dbReference>
<dbReference type="MIM" id="616185">
    <property type="type" value="phenotype"/>
</dbReference>
<dbReference type="neXtProt" id="NX_Q9NXL9"/>
<dbReference type="OpenTargets" id="ENSG00000111877"/>
<dbReference type="Orphanet" id="444048">
    <property type="disease" value="46,XX ovarian dysgenesis-short stature syndrome"/>
</dbReference>
<dbReference type="PharmGKB" id="PA162395071"/>
<dbReference type="VEuPathDB" id="HostDB:ENSG00000111877"/>
<dbReference type="eggNOG" id="KOG0477">
    <property type="taxonomic scope" value="Eukaryota"/>
</dbReference>
<dbReference type="GeneTree" id="ENSGT01110000267230"/>
<dbReference type="HOGENOM" id="CLU_000995_7_2_1"/>
<dbReference type="InParanoid" id="Q9NXL9"/>
<dbReference type="OMA" id="PFQQGVR"/>
<dbReference type="OrthoDB" id="271325at2759"/>
<dbReference type="PAN-GO" id="Q9NXL9">
    <property type="GO annotations" value="5 GO annotations based on evolutionary models"/>
</dbReference>
<dbReference type="PhylomeDB" id="Q9NXL9"/>
<dbReference type="TreeFam" id="TF329421"/>
<dbReference type="PathwayCommons" id="Q9NXL9"/>
<dbReference type="SignaLink" id="Q9NXL9"/>
<dbReference type="BioGRID-ORCS" id="254394">
    <property type="hits" value="35 hits in 1157 CRISPR screens"/>
</dbReference>
<dbReference type="ChiTaRS" id="MCM9">
    <property type="organism name" value="human"/>
</dbReference>
<dbReference type="GenomeRNAi" id="254394"/>
<dbReference type="Pharos" id="Q9NXL9">
    <property type="development level" value="Tbio"/>
</dbReference>
<dbReference type="PRO" id="PR:Q9NXL9"/>
<dbReference type="Proteomes" id="UP000005640">
    <property type="component" value="Chromosome 6"/>
</dbReference>
<dbReference type="RNAct" id="Q9NXL9">
    <property type="molecule type" value="protein"/>
</dbReference>
<dbReference type="Bgee" id="ENSG00000111877">
    <property type="expression patterns" value="Expressed in secondary oocyte and 152 other cell types or tissues"/>
</dbReference>
<dbReference type="ExpressionAtlas" id="Q9NXL9">
    <property type="expression patterns" value="baseline and differential"/>
</dbReference>
<dbReference type="GO" id="GO:0005694">
    <property type="term" value="C:chromosome"/>
    <property type="evidence" value="ECO:0007669"/>
    <property type="project" value="UniProtKB-SubCell"/>
</dbReference>
<dbReference type="GO" id="GO:0042555">
    <property type="term" value="C:MCM complex"/>
    <property type="evidence" value="ECO:0000318"/>
    <property type="project" value="GO_Central"/>
</dbReference>
<dbReference type="GO" id="GO:0097362">
    <property type="term" value="C:MCM8-MCM9 complex"/>
    <property type="evidence" value="ECO:0000314"/>
    <property type="project" value="UniProtKB"/>
</dbReference>
<dbReference type="GO" id="GO:0005634">
    <property type="term" value="C:nucleus"/>
    <property type="evidence" value="ECO:0000314"/>
    <property type="project" value="UniProtKB"/>
</dbReference>
<dbReference type="GO" id="GO:0005524">
    <property type="term" value="F:ATP binding"/>
    <property type="evidence" value="ECO:0007669"/>
    <property type="project" value="UniProtKB-KW"/>
</dbReference>
<dbReference type="GO" id="GO:0016887">
    <property type="term" value="F:ATP hydrolysis activity"/>
    <property type="evidence" value="ECO:0007669"/>
    <property type="project" value="InterPro"/>
</dbReference>
<dbReference type="GO" id="GO:0003682">
    <property type="term" value="F:chromatin binding"/>
    <property type="evidence" value="ECO:0000314"/>
    <property type="project" value="UniProtKB"/>
</dbReference>
<dbReference type="GO" id="GO:0003678">
    <property type="term" value="F:DNA helicase activity"/>
    <property type="evidence" value="ECO:0000315"/>
    <property type="project" value="UniProtKB"/>
</dbReference>
<dbReference type="GO" id="GO:0019899">
    <property type="term" value="F:enzyme binding"/>
    <property type="evidence" value="ECO:0000353"/>
    <property type="project" value="UniProtKB"/>
</dbReference>
<dbReference type="GO" id="GO:0032406">
    <property type="term" value="F:MutLbeta complex binding"/>
    <property type="evidence" value="ECO:0000314"/>
    <property type="project" value="UniProtKB"/>
</dbReference>
<dbReference type="GO" id="GO:0032407">
    <property type="term" value="F:MutSalpha complex binding"/>
    <property type="evidence" value="ECO:0000314"/>
    <property type="project" value="UniProtKB"/>
</dbReference>
<dbReference type="GO" id="GO:0032408">
    <property type="term" value="F:MutSbeta complex binding"/>
    <property type="evidence" value="ECO:0000314"/>
    <property type="project" value="UniProtKB"/>
</dbReference>
<dbReference type="GO" id="GO:0044877">
    <property type="term" value="F:protein-containing complex binding"/>
    <property type="evidence" value="ECO:0000314"/>
    <property type="project" value="UniProtKB"/>
</dbReference>
<dbReference type="GO" id="GO:0003697">
    <property type="term" value="F:single-stranded DNA binding"/>
    <property type="evidence" value="ECO:0000318"/>
    <property type="project" value="GO_Central"/>
</dbReference>
<dbReference type="GO" id="GO:0006974">
    <property type="term" value="P:DNA damage response"/>
    <property type="evidence" value="ECO:0000314"/>
    <property type="project" value="UniProtKB"/>
</dbReference>
<dbReference type="GO" id="GO:0000724">
    <property type="term" value="P:double-strand break repair via homologous recombination"/>
    <property type="evidence" value="ECO:0000314"/>
    <property type="project" value="UniProtKB"/>
</dbReference>
<dbReference type="GO" id="GO:0007292">
    <property type="term" value="P:female gamete generation"/>
    <property type="evidence" value="ECO:0000250"/>
    <property type="project" value="UniProtKB"/>
</dbReference>
<dbReference type="GO" id="GO:0070716">
    <property type="term" value="P:mismatch repair involved in maintenance of fidelity involved in DNA-dependent DNA replication"/>
    <property type="evidence" value="ECO:0000315"/>
    <property type="project" value="UniProtKB"/>
</dbReference>
<dbReference type="GO" id="GO:0071168">
    <property type="term" value="P:protein localization to chromatin"/>
    <property type="evidence" value="ECO:0000315"/>
    <property type="project" value="UniProtKB"/>
</dbReference>
<dbReference type="GO" id="GO:0036298">
    <property type="term" value="P:recombinational interstrand cross-link repair"/>
    <property type="evidence" value="ECO:0000315"/>
    <property type="project" value="UniProtKB"/>
</dbReference>
<dbReference type="CDD" id="cd17760">
    <property type="entry name" value="MCM9"/>
    <property type="match status" value="1"/>
</dbReference>
<dbReference type="FunFam" id="3.40.50.300:FF:000671">
    <property type="entry name" value="DNA helicase MCM9 isoform X1"/>
    <property type="match status" value="1"/>
</dbReference>
<dbReference type="FunFam" id="2.40.50.140:FF:000120">
    <property type="entry name" value="Probable DNA helicase MCM9"/>
    <property type="match status" value="1"/>
</dbReference>
<dbReference type="Gene3D" id="2.40.50.140">
    <property type="entry name" value="Nucleic acid-binding proteins"/>
    <property type="match status" value="1"/>
</dbReference>
<dbReference type="Gene3D" id="3.40.50.300">
    <property type="entry name" value="P-loop containing nucleotide triphosphate hydrolases"/>
    <property type="match status" value="1"/>
</dbReference>
<dbReference type="InterPro" id="IPR003593">
    <property type="entry name" value="AAA+_ATPase"/>
</dbReference>
<dbReference type="InterPro" id="IPR031327">
    <property type="entry name" value="MCM"/>
</dbReference>
<dbReference type="InterPro" id="IPR001208">
    <property type="entry name" value="MCM_dom"/>
</dbReference>
<dbReference type="InterPro" id="IPR041562">
    <property type="entry name" value="MCM_lid"/>
</dbReference>
<dbReference type="InterPro" id="IPR033762">
    <property type="entry name" value="MCM_OB"/>
</dbReference>
<dbReference type="InterPro" id="IPR012340">
    <property type="entry name" value="NA-bd_OB-fold"/>
</dbReference>
<dbReference type="InterPro" id="IPR027417">
    <property type="entry name" value="P-loop_NTPase"/>
</dbReference>
<dbReference type="PANTHER" id="PTHR11630:SF48">
    <property type="entry name" value="DNA HELICASE MCM9"/>
    <property type="match status" value="1"/>
</dbReference>
<dbReference type="PANTHER" id="PTHR11630">
    <property type="entry name" value="DNA REPLICATION LICENSING FACTOR MCM FAMILY MEMBER"/>
    <property type="match status" value="1"/>
</dbReference>
<dbReference type="Pfam" id="PF00493">
    <property type="entry name" value="MCM"/>
    <property type="match status" value="1"/>
</dbReference>
<dbReference type="Pfam" id="PF17855">
    <property type="entry name" value="MCM_lid"/>
    <property type="match status" value="1"/>
</dbReference>
<dbReference type="Pfam" id="PF17207">
    <property type="entry name" value="MCM_OB"/>
    <property type="match status" value="1"/>
</dbReference>
<dbReference type="PRINTS" id="PR01657">
    <property type="entry name" value="MCMFAMILY"/>
</dbReference>
<dbReference type="SMART" id="SM00382">
    <property type="entry name" value="AAA"/>
    <property type="match status" value="1"/>
</dbReference>
<dbReference type="SMART" id="SM00350">
    <property type="entry name" value="MCM"/>
    <property type="match status" value="1"/>
</dbReference>
<dbReference type="SUPFAM" id="SSF50249">
    <property type="entry name" value="Nucleic acid-binding proteins"/>
    <property type="match status" value="1"/>
</dbReference>
<dbReference type="SUPFAM" id="SSF52540">
    <property type="entry name" value="P-loop containing nucleoside triphosphate hydrolases"/>
    <property type="match status" value="1"/>
</dbReference>
<dbReference type="PROSITE" id="PS50051">
    <property type="entry name" value="MCM_2"/>
    <property type="match status" value="1"/>
</dbReference>
<proteinExistence type="evidence at protein level"/>
<accession>Q9NXL9</accession>
<accession>B4DR30</accession>
<accession>B9DI77</accession>
<accession>Q2KHJ0</accession>
<accession>Q8N5S5</accession>
<accession>Q9HCV5</accession>
<evidence type="ECO:0000250" key="1">
    <source>
        <dbReference type="UniProtKB" id="Q2KHI9"/>
    </source>
</evidence>
<evidence type="ECO:0000255" key="2"/>
<evidence type="ECO:0000256" key="3">
    <source>
        <dbReference type="SAM" id="MobiDB-lite"/>
    </source>
</evidence>
<evidence type="ECO:0000269" key="4">
    <source>
    </source>
</evidence>
<evidence type="ECO:0000269" key="5">
    <source>
    </source>
</evidence>
<evidence type="ECO:0000269" key="6">
    <source>
    </source>
</evidence>
<evidence type="ECO:0000269" key="7">
    <source>
    </source>
</evidence>
<evidence type="ECO:0000269" key="8">
    <source>
    </source>
</evidence>
<evidence type="ECO:0000303" key="9">
    <source>
    </source>
</evidence>
<evidence type="ECO:0000303" key="10">
    <source>
    </source>
</evidence>
<evidence type="ECO:0000305" key="11"/>
<evidence type="ECO:0007744" key="12">
    <source>
    </source>
</evidence>
<evidence type="ECO:0007744" key="13">
    <source>
    </source>
</evidence>
<evidence type="ECO:0007829" key="14">
    <source>
        <dbReference type="PDB" id="7DPD"/>
    </source>
</evidence>
<reference key="1">
    <citation type="journal article" date="2004" name="Nat. Genet.">
        <title>Complete sequencing and characterization of 21,243 full-length human cDNAs.</title>
        <authorList>
            <person name="Ota T."/>
            <person name="Suzuki Y."/>
            <person name="Nishikawa T."/>
            <person name="Otsuki T."/>
            <person name="Sugiyama T."/>
            <person name="Irie R."/>
            <person name="Wakamatsu A."/>
            <person name="Hayashi K."/>
            <person name="Sato H."/>
            <person name="Nagai K."/>
            <person name="Kimura K."/>
            <person name="Makita H."/>
            <person name="Sekine M."/>
            <person name="Obayashi M."/>
            <person name="Nishi T."/>
            <person name="Shibahara T."/>
            <person name="Tanaka T."/>
            <person name="Ishii S."/>
            <person name="Yamamoto J."/>
            <person name="Saito K."/>
            <person name="Kawai Y."/>
            <person name="Isono Y."/>
            <person name="Nakamura Y."/>
            <person name="Nagahari K."/>
            <person name="Murakami K."/>
            <person name="Yasuda T."/>
            <person name="Iwayanagi T."/>
            <person name="Wagatsuma M."/>
            <person name="Shiratori A."/>
            <person name="Sudo H."/>
            <person name="Hosoiri T."/>
            <person name="Kaku Y."/>
            <person name="Kodaira H."/>
            <person name="Kondo H."/>
            <person name="Sugawara M."/>
            <person name="Takahashi M."/>
            <person name="Kanda K."/>
            <person name="Yokoi T."/>
            <person name="Furuya T."/>
            <person name="Kikkawa E."/>
            <person name="Omura Y."/>
            <person name="Abe K."/>
            <person name="Kamihara K."/>
            <person name="Katsuta N."/>
            <person name="Sato K."/>
            <person name="Tanikawa M."/>
            <person name="Yamazaki M."/>
            <person name="Ninomiya K."/>
            <person name="Ishibashi T."/>
            <person name="Yamashita H."/>
            <person name="Murakawa K."/>
            <person name="Fujimori K."/>
            <person name="Tanai H."/>
            <person name="Kimata M."/>
            <person name="Watanabe M."/>
            <person name="Hiraoka S."/>
            <person name="Chiba Y."/>
            <person name="Ishida S."/>
            <person name="Ono Y."/>
            <person name="Takiguchi S."/>
            <person name="Watanabe S."/>
            <person name="Yosida M."/>
            <person name="Hotuta T."/>
            <person name="Kusano J."/>
            <person name="Kanehori K."/>
            <person name="Takahashi-Fujii A."/>
            <person name="Hara H."/>
            <person name="Tanase T.-O."/>
            <person name="Nomura Y."/>
            <person name="Togiya S."/>
            <person name="Komai F."/>
            <person name="Hara R."/>
            <person name="Takeuchi K."/>
            <person name="Arita M."/>
            <person name="Imose N."/>
            <person name="Musashino K."/>
            <person name="Yuuki H."/>
            <person name="Oshima A."/>
            <person name="Sasaki N."/>
            <person name="Aotsuka S."/>
            <person name="Yoshikawa Y."/>
            <person name="Matsunawa H."/>
            <person name="Ichihara T."/>
            <person name="Shiohata N."/>
            <person name="Sano S."/>
            <person name="Moriya S."/>
            <person name="Momiyama H."/>
            <person name="Satoh N."/>
            <person name="Takami S."/>
            <person name="Terashima Y."/>
            <person name="Suzuki O."/>
            <person name="Nakagawa S."/>
            <person name="Senoh A."/>
            <person name="Mizoguchi H."/>
            <person name="Goto Y."/>
            <person name="Shimizu F."/>
            <person name="Wakebe H."/>
            <person name="Hishigaki H."/>
            <person name="Watanabe T."/>
            <person name="Sugiyama A."/>
            <person name="Takemoto M."/>
            <person name="Kawakami B."/>
            <person name="Yamazaki M."/>
            <person name="Watanabe K."/>
            <person name="Kumagai A."/>
            <person name="Itakura S."/>
            <person name="Fukuzumi Y."/>
            <person name="Fujimori Y."/>
            <person name="Komiyama M."/>
            <person name="Tashiro H."/>
            <person name="Tanigami A."/>
            <person name="Fujiwara T."/>
            <person name="Ono T."/>
            <person name="Yamada K."/>
            <person name="Fujii Y."/>
            <person name="Ozaki K."/>
            <person name="Hirao M."/>
            <person name="Ohmori Y."/>
            <person name="Kawabata A."/>
            <person name="Hikiji T."/>
            <person name="Kobatake N."/>
            <person name="Inagaki H."/>
            <person name="Ikema Y."/>
            <person name="Okamoto S."/>
            <person name="Okitani R."/>
            <person name="Kawakami T."/>
            <person name="Noguchi S."/>
            <person name="Itoh T."/>
            <person name="Shigeta K."/>
            <person name="Senba T."/>
            <person name="Matsumura K."/>
            <person name="Nakajima Y."/>
            <person name="Mizuno T."/>
            <person name="Morinaga M."/>
            <person name="Sasaki M."/>
            <person name="Togashi T."/>
            <person name="Oyama M."/>
            <person name="Hata H."/>
            <person name="Watanabe M."/>
            <person name="Komatsu T."/>
            <person name="Mizushima-Sugano J."/>
            <person name="Satoh T."/>
            <person name="Shirai Y."/>
            <person name="Takahashi Y."/>
            <person name="Nakagawa K."/>
            <person name="Okumura K."/>
            <person name="Nagase T."/>
            <person name="Nomura N."/>
            <person name="Kikuchi H."/>
            <person name="Masuho Y."/>
            <person name="Yamashita R."/>
            <person name="Nakai K."/>
            <person name="Yada T."/>
            <person name="Nakamura Y."/>
            <person name="Ohara O."/>
            <person name="Isogai T."/>
            <person name="Sugano S."/>
        </authorList>
    </citation>
    <scope>NUCLEOTIDE SEQUENCE [LARGE SCALE MRNA] (ISOFORM 4)</scope>
    <scope>NUCLEOTIDE SEQUENCE [LARGE SCALE MRNA] OF 865-1143 (ISOFORM L)</scope>
    <source>
        <tissue>Teratocarcinoma</tissue>
    </source>
</reference>
<reference key="2">
    <citation type="journal article" date="2003" name="Nature">
        <title>The DNA sequence and analysis of human chromosome 6.</title>
        <authorList>
            <person name="Mungall A.J."/>
            <person name="Palmer S.A."/>
            <person name="Sims S.K."/>
            <person name="Edwards C.A."/>
            <person name="Ashurst J.L."/>
            <person name="Wilming L."/>
            <person name="Jones M.C."/>
            <person name="Horton R."/>
            <person name="Hunt S.E."/>
            <person name="Scott C.E."/>
            <person name="Gilbert J.G.R."/>
            <person name="Clamp M.E."/>
            <person name="Bethel G."/>
            <person name="Milne S."/>
            <person name="Ainscough R."/>
            <person name="Almeida J.P."/>
            <person name="Ambrose K.D."/>
            <person name="Andrews T.D."/>
            <person name="Ashwell R.I.S."/>
            <person name="Babbage A.K."/>
            <person name="Bagguley C.L."/>
            <person name="Bailey J."/>
            <person name="Banerjee R."/>
            <person name="Barker D.J."/>
            <person name="Barlow K.F."/>
            <person name="Bates K."/>
            <person name="Beare D.M."/>
            <person name="Beasley H."/>
            <person name="Beasley O."/>
            <person name="Bird C.P."/>
            <person name="Blakey S.E."/>
            <person name="Bray-Allen S."/>
            <person name="Brook J."/>
            <person name="Brown A.J."/>
            <person name="Brown J.Y."/>
            <person name="Burford D.C."/>
            <person name="Burrill W."/>
            <person name="Burton J."/>
            <person name="Carder C."/>
            <person name="Carter N.P."/>
            <person name="Chapman J.C."/>
            <person name="Clark S.Y."/>
            <person name="Clark G."/>
            <person name="Clee C.M."/>
            <person name="Clegg S."/>
            <person name="Cobley V."/>
            <person name="Collier R.E."/>
            <person name="Collins J.E."/>
            <person name="Colman L.K."/>
            <person name="Corby N.R."/>
            <person name="Coville G.J."/>
            <person name="Culley K.M."/>
            <person name="Dhami P."/>
            <person name="Davies J."/>
            <person name="Dunn M."/>
            <person name="Earthrowl M.E."/>
            <person name="Ellington A.E."/>
            <person name="Evans K.A."/>
            <person name="Faulkner L."/>
            <person name="Francis M.D."/>
            <person name="Frankish A."/>
            <person name="Frankland J."/>
            <person name="French L."/>
            <person name="Garner P."/>
            <person name="Garnett J."/>
            <person name="Ghori M.J."/>
            <person name="Gilby L.M."/>
            <person name="Gillson C.J."/>
            <person name="Glithero R.J."/>
            <person name="Grafham D.V."/>
            <person name="Grant M."/>
            <person name="Gribble S."/>
            <person name="Griffiths C."/>
            <person name="Griffiths M.N.D."/>
            <person name="Hall R."/>
            <person name="Halls K.S."/>
            <person name="Hammond S."/>
            <person name="Harley J.L."/>
            <person name="Hart E.A."/>
            <person name="Heath P.D."/>
            <person name="Heathcott R."/>
            <person name="Holmes S.J."/>
            <person name="Howden P.J."/>
            <person name="Howe K.L."/>
            <person name="Howell G.R."/>
            <person name="Huckle E."/>
            <person name="Humphray S.J."/>
            <person name="Humphries M.D."/>
            <person name="Hunt A.R."/>
            <person name="Johnson C.M."/>
            <person name="Joy A.A."/>
            <person name="Kay M."/>
            <person name="Keenan S.J."/>
            <person name="Kimberley A.M."/>
            <person name="King A."/>
            <person name="Laird G.K."/>
            <person name="Langford C."/>
            <person name="Lawlor S."/>
            <person name="Leongamornlert D.A."/>
            <person name="Leversha M."/>
            <person name="Lloyd C.R."/>
            <person name="Lloyd D.M."/>
            <person name="Loveland J.E."/>
            <person name="Lovell J."/>
            <person name="Martin S."/>
            <person name="Mashreghi-Mohammadi M."/>
            <person name="Maslen G.L."/>
            <person name="Matthews L."/>
            <person name="McCann O.T."/>
            <person name="McLaren S.J."/>
            <person name="McLay K."/>
            <person name="McMurray A."/>
            <person name="Moore M.J.F."/>
            <person name="Mullikin J.C."/>
            <person name="Niblett D."/>
            <person name="Nickerson T."/>
            <person name="Novik K.L."/>
            <person name="Oliver K."/>
            <person name="Overton-Larty E.K."/>
            <person name="Parker A."/>
            <person name="Patel R."/>
            <person name="Pearce A.V."/>
            <person name="Peck A.I."/>
            <person name="Phillimore B.J.C.T."/>
            <person name="Phillips S."/>
            <person name="Plumb R.W."/>
            <person name="Porter K.M."/>
            <person name="Ramsey Y."/>
            <person name="Ranby S.A."/>
            <person name="Rice C.M."/>
            <person name="Ross M.T."/>
            <person name="Searle S.M."/>
            <person name="Sehra H.K."/>
            <person name="Sheridan E."/>
            <person name="Skuce C.D."/>
            <person name="Smith S."/>
            <person name="Smith M."/>
            <person name="Spraggon L."/>
            <person name="Squares S.L."/>
            <person name="Steward C.A."/>
            <person name="Sycamore N."/>
            <person name="Tamlyn-Hall G."/>
            <person name="Tester J."/>
            <person name="Theaker A.J."/>
            <person name="Thomas D.W."/>
            <person name="Thorpe A."/>
            <person name="Tracey A."/>
            <person name="Tromans A."/>
            <person name="Tubby B."/>
            <person name="Wall M."/>
            <person name="Wallis J.M."/>
            <person name="West A.P."/>
            <person name="White S.S."/>
            <person name="Whitehead S.L."/>
            <person name="Whittaker H."/>
            <person name="Wild A."/>
            <person name="Willey D.J."/>
            <person name="Wilmer T.E."/>
            <person name="Wood J.M."/>
            <person name="Wray P.W."/>
            <person name="Wyatt J.C."/>
            <person name="Young L."/>
            <person name="Younger R.M."/>
            <person name="Bentley D.R."/>
            <person name="Coulson A."/>
            <person name="Durbin R.M."/>
            <person name="Hubbard T."/>
            <person name="Sulston J.E."/>
            <person name="Dunham I."/>
            <person name="Rogers J."/>
            <person name="Beck S."/>
        </authorList>
    </citation>
    <scope>NUCLEOTIDE SEQUENCE [LARGE SCALE GENOMIC DNA]</scope>
</reference>
<reference key="3">
    <citation type="journal article" date="2004" name="Genome Res.">
        <title>The status, quality, and expansion of the NIH full-length cDNA project: the Mammalian Gene Collection (MGC).</title>
        <authorList>
            <consortium name="The MGC Project Team"/>
        </authorList>
    </citation>
    <scope>NUCLEOTIDE SEQUENCE [LARGE SCALE MRNA] (ISOFORM S)</scope>
    <source>
        <tissue>Brain</tissue>
    </source>
</reference>
<reference key="4">
    <citation type="journal article" date="2005" name="Gene">
        <title>Identification of full genes and proteins of MCM9, a novel, vertebrate-specific member of the MCM2-8 protein family.</title>
        <authorList>
            <person name="Lutzmann M."/>
            <person name="Maiorano D."/>
            <person name="Mechali M."/>
        </authorList>
    </citation>
    <scope>IDENTIFICATION</scope>
</reference>
<reference key="5">
    <citation type="journal article" date="2008" name="Proc. Natl. Acad. Sci. U.S.A.">
        <title>A quantitative atlas of mitotic phosphorylation.</title>
        <authorList>
            <person name="Dephoure N."/>
            <person name="Zhou C."/>
            <person name="Villen J."/>
            <person name="Beausoleil S.A."/>
            <person name="Bakalarski C.E."/>
            <person name="Elledge S.J."/>
            <person name="Gygi S.P."/>
        </authorList>
    </citation>
    <scope>IDENTIFICATION BY MASS SPECTROMETRY [LARGE SCALE ANALYSIS]</scope>
    <source>
        <tissue>Cervix carcinoma</tissue>
    </source>
</reference>
<reference key="6">
    <citation type="journal article" date="2010" name="Sci. Signal.">
        <title>Quantitative phosphoproteomics reveals widespread full phosphorylation site occupancy during mitosis.</title>
        <authorList>
            <person name="Olsen J.V."/>
            <person name="Vermeulen M."/>
            <person name="Santamaria A."/>
            <person name="Kumar C."/>
            <person name="Miller M.L."/>
            <person name="Jensen L.J."/>
            <person name="Gnad F."/>
            <person name="Cox J."/>
            <person name="Jensen T.S."/>
            <person name="Nigg E.A."/>
            <person name="Brunak S."/>
            <person name="Mann M."/>
        </authorList>
    </citation>
    <scope>PHOSPHORYLATION [LARGE SCALE ANALYSIS] AT SER-762</scope>
    <scope>IDENTIFICATION BY MASS SPECTROMETRY [LARGE SCALE ANALYSIS]</scope>
    <source>
        <tissue>Cervix carcinoma</tissue>
    </source>
</reference>
<reference key="7">
    <citation type="journal article" date="2013" name="Gene">
        <title>Identification, quantification, and evolutionary analysis of a novel isoform of MCM9.</title>
        <authorList>
            <person name="Jeffries E.P."/>
            <person name="Denq W.I."/>
            <person name="Bartko J.C."/>
            <person name="Trakselis M.A."/>
        </authorList>
    </citation>
    <scope>ALTERNATIVE SPLICING (ISOFORM M)</scope>
    <scope>DEVELOPMENTAL STAGE</scope>
</reference>
<reference key="8">
    <citation type="journal article" date="2013" name="J. Proteome Res.">
        <title>Toward a comprehensive characterization of a human cancer cell phosphoproteome.</title>
        <authorList>
            <person name="Zhou H."/>
            <person name="Di Palma S."/>
            <person name="Preisinger C."/>
            <person name="Peng M."/>
            <person name="Polat A.N."/>
            <person name="Heck A.J."/>
            <person name="Mohammed S."/>
        </authorList>
    </citation>
    <scope>PHOSPHORYLATION [LARGE SCALE ANALYSIS] AT SER-762; SER-802 AND SER-1109</scope>
    <scope>IDENTIFICATION BY MASS SPECTROMETRY [LARGE SCALE ANALYSIS]</scope>
    <source>
        <tissue>Cervix carcinoma</tissue>
        <tissue>Erythroleukemia</tissue>
    </source>
</reference>
<reference key="9">
    <citation type="journal article" date="2013" name="Mol. Cell. Biol.">
        <title>The MCM8-MCM9 complex promotes RAD51 recruitment at DNA damage sites to facilitate homologous recombination.</title>
        <authorList>
            <person name="Park J."/>
            <person name="Long D.T."/>
            <person name="Lee K.Y."/>
            <person name="Abbas T."/>
            <person name="Shibata E."/>
            <person name="Negishi M."/>
            <person name="Luo Y."/>
            <person name="Schimenti J.C."/>
            <person name="Gambus A."/>
            <person name="Walter J.C."/>
            <person name="Dutta A."/>
        </authorList>
    </citation>
    <scope>FUNCTION</scope>
    <scope>IDENTIFICATION IN THE MCM8-MCM9 COMPLEX</scope>
    <scope>INTERACTION WITH RAD51</scope>
    <scope>SUBCELLULAR LOCATION</scope>
</reference>
<reference key="10">
    <citation type="journal article" date="2014" name="Am. J. Hum. Genet.">
        <title>MCM9 mutations are associated with ovarian failure, short stature, and chromosomal instability.</title>
        <authorList>
            <person name="Wood-Trageser M.A."/>
            <person name="Gurbuz F."/>
            <person name="Yatsenko S.A."/>
            <person name="Jeffries E.P."/>
            <person name="Kotan L.D."/>
            <person name="Surti U."/>
            <person name="Ketterer D.M."/>
            <person name="Matic J."/>
            <person name="Chipkin J."/>
            <person name="Jiang H."/>
            <person name="Trakselis M.A."/>
            <person name="Topaloglu A.K."/>
            <person name="Rajkovic A."/>
        </authorList>
    </citation>
    <scope>INVOLVEMENT IN ODG4</scope>
</reference>
<reference key="11">
    <citation type="journal article" date="2015" name="Mol. Cell">
        <title>MCM9 Is Required for Mammalian DNA Mismatch Repair.</title>
        <authorList>
            <person name="Traver S."/>
            <person name="Coulombe P."/>
            <person name="Peiffer I."/>
            <person name="Hutchins J.R."/>
            <person name="Kitzmann M."/>
            <person name="Latreille D."/>
            <person name="Mechali M."/>
        </authorList>
    </citation>
    <scope>FUNCTION</scope>
    <scope>CATALYTIC ACTIVITY</scope>
    <scope>IDENTIFICATION IN THE MCM8-MCM9 COMPLEX</scope>
    <scope>INTERACTION WITH MMR COMPLEX</scope>
    <scope>SUBCELLULAR LOCATION</scope>
    <scope>MUTAGENESIS OF LYS-358 AND ARG-482</scope>
</reference>
<reference key="12">
    <citation type="journal article" date="2015" name="Nat. Commun.">
        <title>MCM8-9 complex promotes resection of double-strand break ends by MRE11-RAD50-NBS1 complex.</title>
        <authorList>
            <person name="Lee K.Y."/>
            <person name="Im J.S."/>
            <person name="Shibata E."/>
            <person name="Park J."/>
            <person name="Handa N."/>
            <person name="Kowalczykowski S.C."/>
            <person name="Dutta A."/>
        </authorList>
    </citation>
    <scope>FUNCTION</scope>
    <scope>INTERACTION WITH MRN COMPLEX AND MCM8</scope>
</reference>
<name>MCM9_HUMAN</name>
<protein>
    <recommendedName>
        <fullName>DNA helicase MCM9</fullName>
        <shortName>hMCM9</shortName>
        <ecNumber evidence="8">3.6.4.12</ecNumber>
    </recommendedName>
    <alternativeName>
        <fullName>Mini-chromosome maintenance deficient domain-containing protein 1</fullName>
    </alternativeName>
    <alternativeName>
        <fullName>Minichromosome maintenance 9</fullName>
    </alternativeName>
</protein>
<sequence length="1143" mass="127313">MNSDQVTLVGQVFESYVSEYHKNDILLILKERDEDAHYPVVVNAMTLFETNMEIGEYFNMFPSEVLTIFDSALRRSALTILQSLSQPEAVSMKQNLHARISGLPVCPELVREHIPKTKDVGHFLSVTGTVIRTSLVKVLEFERDYMCNKCKHVFVIKADFEQYYTFCRPSSCPSLESCDSSKFTCLSGLSSSPTRCRDYQEIKIQEQVQRLSVGSIPRSMKVILEDDLVDSCKSGDDLTIYGIVMQRWKPFQQDVRCEVEIVLKANYIQVNNEQSSGIIMDEEVQKEFEDFWEYYKSDPFAGRNVILASLCPQVFGMYLVKLAVAMVLAGGIQRTDATGTRVRGESHLLLVGDPGTGKSQFLKYAAKITPRSVLTTGIGSTSAGLTVTAVKDSGEWNLEAGALVLADAGLCCIDEFNSLKEHDRTSIHEAMEQQTISVAKAGLVCKLNTRTTILAATNPKGQYDPQESVSVNIALGSPLLSRFDLILVLLDTKNEDWDRIISSFILENKGYPSKSEKLWSMEKMKTYFCLIRNLQPTLSDVGNQVLLRYYQMQRQSDCRNAARTTIRLLESLIRLAEAHARLMFRDTVTLEDAITVVSVMESSMQGGALLGGVNALHTSFPENPGEQYQRQCELILEKLELQSLLSEELRRLERLQNQSVHQSQPRVLEVETTPGSLRNGPGEESNFRTSSQQEINYSTHIFSPGGSPEGSPVLDPPPHLEPNRSTSRKHSAQHKNNRDDSLDWFDFMATHQSEPKNTVVVSPHPKTSGENMASKISNSTSQGKEKSEPGQRSKVDIGLLPSPGETGVPWRADNVESNKKKRLALDSEAAVSADKPDSVLTHHVPRNLQKLCKERAQKLCRNSTRVPAQCTVPSHPQSTPVHSPDRMLDSPKRKRPKSLAQVEEPAIENVKPPGSPVAKLAKFTFKQKSKLIHSFEDHSHVSPGATKIAVHSPKISQRRTRRDAALPVKRPGKLTSTPGNQISSQPQGETKEVSQQPPEKHGPREKVMCAPEKRIIQPELELGNETGCAHLTCEGDKKEEVSGSNKSGKVHACTLARLANFCFTPPSESKSKSPPPERKNRGERGPSSPPTTTAPMRVSKRKSFQLRGSTEKLIVSKESLFTLPELGDEAFDCDWDEEMRKKS</sequence>
<gene>
    <name type="primary">MCM9</name>
    <name type="synonym">C6orf61</name>
    <name type="synonym">MCMDC1</name>
</gene>
<keyword id="KW-0002">3D-structure</keyword>
<keyword id="KW-0025">Alternative splicing</keyword>
<keyword id="KW-0067">ATP-binding</keyword>
<keyword id="KW-0158">Chromosome</keyword>
<keyword id="KW-0227">DNA damage</keyword>
<keyword id="KW-0234">DNA repair</keyword>
<keyword id="KW-0238">DNA-binding</keyword>
<keyword id="KW-0347">Helicase</keyword>
<keyword id="KW-0378">Hydrolase</keyword>
<keyword id="KW-0547">Nucleotide-binding</keyword>
<keyword id="KW-0539">Nucleus</keyword>
<keyword id="KW-0597">Phosphoprotein</keyword>
<keyword id="KW-1267">Proteomics identification</keyword>
<keyword id="KW-1185">Reference proteome</keyword>
<feature type="chain" id="PRO_0000089513" description="DNA helicase MCM9">
    <location>
        <begin position="1"/>
        <end position="1143"/>
    </location>
</feature>
<feature type="domain" description="MCM" evidence="2">
    <location>
        <begin position="300"/>
        <end position="505"/>
    </location>
</feature>
<feature type="region of interest" description="Disordered" evidence="3">
    <location>
        <begin position="656"/>
        <end position="738"/>
    </location>
</feature>
<feature type="region of interest" description="Disordered" evidence="3">
    <location>
        <begin position="755"/>
        <end position="815"/>
    </location>
</feature>
<feature type="region of interest" description="Disordered" evidence="3">
    <location>
        <begin position="868"/>
        <end position="916"/>
    </location>
</feature>
<feature type="region of interest" description="Disordered" evidence="3">
    <location>
        <begin position="942"/>
        <end position="1011"/>
    </location>
</feature>
<feature type="region of interest" description="Disordered" evidence="3">
    <location>
        <begin position="1063"/>
        <end position="1105"/>
    </location>
</feature>
<feature type="compositionally biased region" description="Polar residues" evidence="3">
    <location>
        <begin position="687"/>
        <end position="701"/>
    </location>
</feature>
<feature type="compositionally biased region" description="Basic residues" evidence="3">
    <location>
        <begin position="726"/>
        <end position="735"/>
    </location>
</feature>
<feature type="compositionally biased region" description="Polar residues" evidence="3">
    <location>
        <begin position="768"/>
        <end position="782"/>
    </location>
</feature>
<feature type="compositionally biased region" description="Basic and acidic residues" evidence="3">
    <location>
        <begin position="783"/>
        <end position="795"/>
    </location>
</feature>
<feature type="compositionally biased region" description="Polar residues" evidence="3">
    <location>
        <begin position="868"/>
        <end position="881"/>
    </location>
</feature>
<feature type="compositionally biased region" description="Polar residues" evidence="3">
    <location>
        <begin position="974"/>
        <end position="997"/>
    </location>
</feature>
<feature type="compositionally biased region" description="Basic and acidic residues" evidence="3">
    <location>
        <begin position="998"/>
        <end position="1011"/>
    </location>
</feature>
<feature type="compositionally biased region" description="Basic and acidic residues" evidence="3">
    <location>
        <begin position="1069"/>
        <end position="1084"/>
    </location>
</feature>
<feature type="binding site" evidence="2">
    <location>
        <begin position="352"/>
        <end position="359"/>
    </location>
    <ligand>
        <name>ATP</name>
        <dbReference type="ChEBI" id="CHEBI:30616"/>
    </ligand>
</feature>
<feature type="modified residue" description="Phosphoserine" evidence="12 13">
    <location>
        <position position="762"/>
    </location>
</feature>
<feature type="modified residue" description="Phosphoserine" evidence="13">
    <location>
        <position position="802"/>
    </location>
</feature>
<feature type="modified residue" description="Phosphoserine" evidence="13">
    <location>
        <position position="1109"/>
    </location>
</feature>
<feature type="splice variant" id="VSP_044180" description="In isoform 4." evidence="9">
    <location>
        <begin position="1"/>
        <end position="381"/>
    </location>
</feature>
<feature type="splice variant" id="VSP_044181" description="In isoform 4." evidence="9">
    <original>SA</original>
    <variation>MS</variation>
    <location>
        <begin position="382"/>
        <end position="383"/>
    </location>
</feature>
<feature type="splice variant" id="VSP_028013" description="In isoform S." evidence="10">
    <original>AGLTVTAVK</original>
    <variation>AGIVCDNFK</variation>
    <location>
        <begin position="383"/>
        <end position="391"/>
    </location>
</feature>
<feature type="splice variant" id="VSP_028014" description="In isoform S." evidence="10">
    <location>
        <begin position="392"/>
        <end position="1143"/>
    </location>
</feature>
<feature type="splice variant" id="VSP_047462" description="In isoform M." evidence="11">
    <original>GGALLGGVNALHTSFPENPGEQYQRQCELILEKLELQSLLSEE</original>
    <variation>VTESECAPIPTTGIGGRDYSRILEKWSRGRIKLQNFITAGNQL</variation>
    <location>
        <begin position="606"/>
        <end position="648"/>
    </location>
</feature>
<feature type="splice variant" id="VSP_047463" description="In isoform M." evidence="11">
    <location>
        <begin position="649"/>
        <end position="1143"/>
    </location>
</feature>
<feature type="mutagenesis site" description="Loss of helicase activity and DNA mismatch repair function but does not affect the interaction with MCM8, MSH2 or chromatin; when associated with A-482." evidence="8">
    <original>K</original>
    <variation>A</variation>
    <location>
        <position position="358"/>
    </location>
</feature>
<feature type="mutagenesis site" description="Loss of helicase activity and DNA mismatch repair function but does not affect the interaction with MCM8, MSH2 or chromatin; when associated with A-358." evidence="8">
    <original>R</original>
    <variation>A</variation>
    <location>
        <position position="482"/>
    </location>
</feature>
<feature type="sequence conflict" description="In Ref. 1; BAG61142." evidence="11" ref="1">
    <original>Q</original>
    <variation>R</variation>
    <location>
        <position position="433"/>
    </location>
</feature>
<feature type="sequence conflict" description="In Ref. 1; BAG61142." evidence="11" ref="1">
    <original>C</original>
    <variation>S</variation>
    <location>
        <position position="558"/>
    </location>
</feature>
<feature type="sequence conflict" description="In Ref. 1; BAA90991." evidence="11" ref="1">
    <original>F</original>
    <variation>V</variation>
    <location>
        <position position="1063"/>
    </location>
</feature>
<feature type="sequence conflict" description="In Ref. 1; BAA90991." evidence="11" ref="1">
    <original>D</original>
    <variation>G</variation>
    <location>
        <position position="1136"/>
    </location>
</feature>
<feature type="helix" evidence="14">
    <location>
        <begin position="3"/>
        <end position="20"/>
    </location>
</feature>
<feature type="helix" evidence="14">
    <location>
        <begin position="22"/>
        <end position="30"/>
    </location>
</feature>
<feature type="strand" evidence="14">
    <location>
        <begin position="34"/>
        <end position="36"/>
    </location>
</feature>
<feature type="strand" evidence="14">
    <location>
        <begin position="38"/>
        <end position="43"/>
    </location>
</feature>
<feature type="helix" evidence="14">
    <location>
        <begin position="44"/>
        <end position="50"/>
    </location>
</feature>
<feature type="helix" evidence="14">
    <location>
        <begin position="52"/>
        <end position="60"/>
    </location>
</feature>
<feature type="helix" evidence="14">
    <location>
        <begin position="62"/>
        <end position="82"/>
    </location>
</feature>
<feature type="helix" evidence="14">
    <location>
        <begin position="87"/>
        <end position="89"/>
    </location>
</feature>
<feature type="strand" evidence="14">
    <location>
        <begin position="96"/>
        <end position="101"/>
    </location>
</feature>
<feature type="turn" evidence="14">
    <location>
        <begin position="107"/>
        <end position="109"/>
    </location>
</feature>
<feature type="strand" evidence="14">
    <location>
        <begin position="110"/>
        <end position="113"/>
    </location>
</feature>
<feature type="helix" evidence="14">
    <location>
        <begin position="117"/>
        <end position="119"/>
    </location>
</feature>
<feature type="strand" evidence="14">
    <location>
        <begin position="123"/>
        <end position="133"/>
    </location>
</feature>
<feature type="strand" evidence="14">
    <location>
        <begin position="137"/>
        <end position="140"/>
    </location>
</feature>
<feature type="strand" evidence="14">
    <location>
        <begin position="142"/>
        <end position="147"/>
    </location>
</feature>
<feature type="turn" evidence="14">
    <location>
        <begin position="148"/>
        <end position="150"/>
    </location>
</feature>
<feature type="strand" evidence="14">
    <location>
        <begin position="153"/>
        <end position="157"/>
    </location>
</feature>
<feature type="turn" evidence="14">
    <location>
        <begin position="160"/>
        <end position="163"/>
    </location>
</feature>
<feature type="strand" evidence="14">
    <location>
        <begin position="174"/>
        <end position="176"/>
    </location>
</feature>
<feature type="strand" evidence="14">
    <location>
        <begin position="183"/>
        <end position="185"/>
    </location>
</feature>
<feature type="turn" evidence="14">
    <location>
        <begin position="187"/>
        <end position="189"/>
    </location>
</feature>
<feature type="strand" evidence="14">
    <location>
        <begin position="196"/>
        <end position="205"/>
    </location>
</feature>
<feature type="strand" evidence="14">
    <location>
        <begin position="210"/>
        <end position="213"/>
    </location>
</feature>
<feature type="strand" evidence="14">
    <location>
        <begin position="219"/>
        <end position="225"/>
    </location>
</feature>
<feature type="helix" evidence="14">
    <location>
        <begin position="226"/>
        <end position="228"/>
    </location>
</feature>
<feature type="strand" evidence="14">
    <location>
        <begin position="237"/>
        <end position="249"/>
    </location>
</feature>
<feature type="strand" evidence="14">
    <location>
        <begin position="258"/>
        <end position="270"/>
    </location>
</feature>
<organism>
    <name type="scientific">Homo sapiens</name>
    <name type="common">Human</name>
    <dbReference type="NCBI Taxonomy" id="9606"/>
    <lineage>
        <taxon>Eukaryota</taxon>
        <taxon>Metazoa</taxon>
        <taxon>Chordata</taxon>
        <taxon>Craniata</taxon>
        <taxon>Vertebrata</taxon>
        <taxon>Euteleostomi</taxon>
        <taxon>Mammalia</taxon>
        <taxon>Eutheria</taxon>
        <taxon>Euarchontoglires</taxon>
        <taxon>Primates</taxon>
        <taxon>Haplorrhini</taxon>
        <taxon>Catarrhini</taxon>
        <taxon>Hominidae</taxon>
        <taxon>Homo</taxon>
    </lineage>
</organism>